<organism>
    <name type="scientific">Oryza sativa subsp. japonica</name>
    <name type="common">Rice</name>
    <dbReference type="NCBI Taxonomy" id="39947"/>
    <lineage>
        <taxon>Eukaryota</taxon>
        <taxon>Viridiplantae</taxon>
        <taxon>Streptophyta</taxon>
        <taxon>Embryophyta</taxon>
        <taxon>Tracheophyta</taxon>
        <taxon>Spermatophyta</taxon>
        <taxon>Magnoliopsida</taxon>
        <taxon>Liliopsida</taxon>
        <taxon>Poales</taxon>
        <taxon>Poaceae</taxon>
        <taxon>BOP clade</taxon>
        <taxon>Oryzoideae</taxon>
        <taxon>Oryzeae</taxon>
        <taxon>Oryzinae</taxon>
        <taxon>Oryza</taxon>
        <taxon>Oryza sativa</taxon>
    </lineage>
</organism>
<name>HSFA9_ORYSJ</name>
<proteinExistence type="evidence at transcript level"/>
<gene>
    <name type="primary">HSFA9</name>
    <name type="synonym">HSF09</name>
    <name type="synonym">HSF8</name>
    <name type="ordered locus">Os03g0224700</name>
    <name type="ordered locus">LOC_Os03g12370</name>
    <name type="ORF">OsJ_009601</name>
    <name type="ORF">OSJNBa0081P02.6</name>
</gene>
<comment type="function">
    <text evidence="1">Transcriptional regulator that specifically binds DNA of heat shock promoter elements (HSE).</text>
</comment>
<comment type="subunit">
    <text evidence="1">Homotrimer.</text>
</comment>
<comment type="subcellular location">
    <subcellularLocation>
        <location evidence="5">Cytoplasm</location>
    </subcellularLocation>
    <subcellularLocation>
        <location evidence="5">Nucleus</location>
    </subcellularLocation>
</comment>
<comment type="alternative products">
    <event type="alternative splicing"/>
    <isoform>
        <id>Q10PR4-1</id>
        <name>1</name>
        <sequence type="displayed"/>
    </isoform>
    <isoform>
        <id>Q10PR4-2</id>
        <name>2</name>
        <sequence type="described" ref="VSP_035446 VSP_035447"/>
    </isoform>
</comment>
<comment type="domain">
    <text>The hydrophobic-rich region (HR-A/B) corresponds to the oligomerization domain.</text>
</comment>
<comment type="PTM">
    <text evidence="1">Exhibits temperature-dependent phosphorylation.</text>
</comment>
<comment type="similarity">
    <text evidence="5">Belongs to the HSF family. Class A subfamily.</text>
</comment>
<evidence type="ECO:0000250" key="1"/>
<evidence type="ECO:0000255" key="2"/>
<evidence type="ECO:0000256" key="3">
    <source>
        <dbReference type="SAM" id="MobiDB-lite"/>
    </source>
</evidence>
<evidence type="ECO:0000303" key="4">
    <source ref="1"/>
</evidence>
<evidence type="ECO:0000305" key="5"/>
<accession>Q10PR4</accession>
<accession>B7EKZ3</accession>
<accession>Q70KS6</accession>
<accession>Q8H7S5</accession>
<feature type="chain" id="PRO_0000350832" description="Heat stress transcription factor A-9">
    <location>
        <begin position="1"/>
        <end position="410"/>
    </location>
</feature>
<feature type="region of interest" description="Disordered" evidence="3">
    <location>
        <begin position="1"/>
        <end position="44"/>
    </location>
</feature>
<feature type="region of interest" description="Hydrophobic repeat HR-A/B">
    <location>
        <begin position="179"/>
        <end position="229"/>
    </location>
</feature>
<feature type="coiled-coil region" evidence="2">
    <location>
        <begin position="171"/>
        <end position="246"/>
    </location>
</feature>
<feature type="short sequence motif" description="Nuclear localization signal" evidence="2">
    <location>
        <begin position="256"/>
        <end position="260"/>
    </location>
</feature>
<feature type="short sequence motif" description="Nuclear export signal" evidence="2">
    <location>
        <begin position="279"/>
        <end position="290"/>
    </location>
</feature>
<feature type="compositionally biased region" description="Gly residues" evidence="3">
    <location>
        <begin position="20"/>
        <end position="33"/>
    </location>
</feature>
<feature type="splice variant" id="VSP_035446" description="In isoform 2." evidence="4">
    <original>ADV</original>
    <variation>GND</variation>
    <location>
        <begin position="404"/>
        <end position="406"/>
    </location>
</feature>
<feature type="splice variant" id="VSP_035447" description="In isoform 2." evidence="4">
    <location>
        <begin position="407"/>
        <end position="410"/>
    </location>
</feature>
<dbReference type="EMBL" id="AY344490">
    <property type="protein sequence ID" value="AAQ23062.1"/>
    <property type="molecule type" value="mRNA"/>
</dbReference>
<dbReference type="EMBL" id="AC107226">
    <property type="protein sequence ID" value="AAN52741.1"/>
    <property type="molecule type" value="Genomic_DNA"/>
</dbReference>
<dbReference type="EMBL" id="DP000009">
    <property type="protein sequence ID" value="ABF94729.1"/>
    <property type="molecule type" value="Genomic_DNA"/>
</dbReference>
<dbReference type="EMBL" id="DP000009">
    <property type="protein sequence ID" value="ABF94730.1"/>
    <property type="molecule type" value="Genomic_DNA"/>
</dbReference>
<dbReference type="EMBL" id="AP008209">
    <property type="protein sequence ID" value="BAF11343.1"/>
    <property type="molecule type" value="Genomic_DNA"/>
</dbReference>
<dbReference type="EMBL" id="AP014959">
    <property type="protein sequence ID" value="BAS83045.1"/>
    <property type="molecule type" value="Genomic_DNA"/>
</dbReference>
<dbReference type="EMBL" id="CM000140">
    <property type="protein sequence ID" value="EAZ26118.1"/>
    <property type="molecule type" value="Genomic_DNA"/>
</dbReference>
<dbReference type="EMBL" id="AK072571">
    <property type="protein sequence ID" value="BAG93040.1"/>
    <property type="molecule type" value="mRNA"/>
</dbReference>
<dbReference type="EMBL" id="AJ575240">
    <property type="protein sequence ID" value="CAE00876.1"/>
    <property type="molecule type" value="mRNA"/>
</dbReference>
<dbReference type="RefSeq" id="XP_015633341.1">
    <property type="nucleotide sequence ID" value="XM_015777855.1"/>
</dbReference>
<dbReference type="SMR" id="Q10PR4"/>
<dbReference type="FunCoup" id="Q10PR4">
    <property type="interactions" value="17"/>
</dbReference>
<dbReference type="MINT" id="Q10PR4"/>
<dbReference type="STRING" id="39947.Q10PR4"/>
<dbReference type="PaxDb" id="39947-Q10PR4"/>
<dbReference type="EnsemblPlants" id="Os03t0224700-01">
    <molecule id="Q10PR4-1"/>
    <property type="protein sequence ID" value="Os03t0224700-01"/>
    <property type="gene ID" value="Os03g0224700"/>
</dbReference>
<dbReference type="Gramene" id="Os03t0224700-01">
    <molecule id="Q10PR4-1"/>
    <property type="protein sequence ID" value="Os03t0224700-01"/>
    <property type="gene ID" value="Os03g0224700"/>
</dbReference>
<dbReference type="KEGG" id="dosa:Os03g0224700"/>
<dbReference type="eggNOG" id="KOG0627">
    <property type="taxonomic scope" value="Eukaryota"/>
</dbReference>
<dbReference type="HOGENOM" id="CLU_030308_5_0_1"/>
<dbReference type="InParanoid" id="Q10PR4"/>
<dbReference type="OMA" id="CLMEAQY"/>
<dbReference type="OrthoDB" id="60033at2759"/>
<dbReference type="Proteomes" id="UP000000763">
    <property type="component" value="Chromosome 3"/>
</dbReference>
<dbReference type="Proteomes" id="UP000007752">
    <property type="component" value="Chromosome 3"/>
</dbReference>
<dbReference type="Proteomes" id="UP000059680">
    <property type="component" value="Chromosome 3"/>
</dbReference>
<dbReference type="GO" id="GO:0005737">
    <property type="term" value="C:cytoplasm"/>
    <property type="evidence" value="ECO:0007669"/>
    <property type="project" value="UniProtKB-SubCell"/>
</dbReference>
<dbReference type="GO" id="GO:0005634">
    <property type="term" value="C:nucleus"/>
    <property type="evidence" value="ECO:0000318"/>
    <property type="project" value="GO_Central"/>
</dbReference>
<dbReference type="GO" id="GO:0003700">
    <property type="term" value="F:DNA-binding transcription factor activity"/>
    <property type="evidence" value="ECO:0000318"/>
    <property type="project" value="GO_Central"/>
</dbReference>
<dbReference type="GO" id="GO:0043565">
    <property type="term" value="F:sequence-specific DNA binding"/>
    <property type="evidence" value="ECO:0007669"/>
    <property type="project" value="InterPro"/>
</dbReference>
<dbReference type="GO" id="GO:0034605">
    <property type="term" value="P:cellular response to heat"/>
    <property type="evidence" value="ECO:0000318"/>
    <property type="project" value="GO_Central"/>
</dbReference>
<dbReference type="GO" id="GO:0006357">
    <property type="term" value="P:regulation of transcription by RNA polymerase II"/>
    <property type="evidence" value="ECO:0000318"/>
    <property type="project" value="GO_Central"/>
</dbReference>
<dbReference type="FunFam" id="1.10.10.10:FF:000367">
    <property type="entry name" value="Heat stress transcription factor A-8"/>
    <property type="match status" value="1"/>
</dbReference>
<dbReference type="Gene3D" id="1.10.10.10">
    <property type="entry name" value="Winged helix-like DNA-binding domain superfamily/Winged helix DNA-binding domain"/>
    <property type="match status" value="1"/>
</dbReference>
<dbReference type="InterPro" id="IPR000232">
    <property type="entry name" value="HSF_DNA-bd"/>
</dbReference>
<dbReference type="InterPro" id="IPR036388">
    <property type="entry name" value="WH-like_DNA-bd_sf"/>
</dbReference>
<dbReference type="InterPro" id="IPR036390">
    <property type="entry name" value="WH_DNA-bd_sf"/>
</dbReference>
<dbReference type="PANTHER" id="PTHR10015">
    <property type="entry name" value="HEAT SHOCK TRANSCRIPTION FACTOR"/>
    <property type="match status" value="1"/>
</dbReference>
<dbReference type="PANTHER" id="PTHR10015:SF407">
    <property type="entry name" value="HEAT STRESS TRANSCRIPTION FACTOR A-9"/>
    <property type="match status" value="1"/>
</dbReference>
<dbReference type="Pfam" id="PF00447">
    <property type="entry name" value="HSF_DNA-bind"/>
    <property type="match status" value="1"/>
</dbReference>
<dbReference type="PRINTS" id="PR00056">
    <property type="entry name" value="HSFDOMAIN"/>
</dbReference>
<dbReference type="SMART" id="SM00415">
    <property type="entry name" value="HSF"/>
    <property type="match status" value="1"/>
</dbReference>
<dbReference type="SUPFAM" id="SSF46785">
    <property type="entry name" value="Winged helix' DNA-binding domain"/>
    <property type="match status" value="1"/>
</dbReference>
<dbReference type="PROSITE" id="PS00434">
    <property type="entry name" value="HSF_DOMAIN"/>
    <property type="match status" value="1"/>
</dbReference>
<protein>
    <recommendedName>
        <fullName>Heat stress transcription factor A-9</fullName>
    </recommendedName>
    <alternativeName>
        <fullName>Heat stress transcription factor 8</fullName>
        <shortName>rHsf8</shortName>
    </alternativeName>
    <alternativeName>
        <fullName>Heat stress transcription factor 9</fullName>
        <shortName>OsHsf-09</shortName>
    </alternativeName>
</protein>
<keyword id="KW-0025">Alternative splicing</keyword>
<keyword id="KW-0175">Coiled coil</keyword>
<keyword id="KW-0963">Cytoplasm</keyword>
<keyword id="KW-0238">DNA-binding</keyword>
<keyword id="KW-0539">Nucleus</keyword>
<keyword id="KW-0597">Phosphoprotein</keyword>
<keyword id="KW-1185">Reference proteome</keyword>
<keyword id="KW-0346">Stress response</keyword>
<keyword id="KW-0804">Transcription</keyword>
<keyword id="KW-0805">Transcription regulation</keyword>
<reference key="1">
    <citation type="submission" date="2003-07" db="EMBL/GenBank/DDBJ databases">
        <title>Isolation rice heat shock factor by modified yeast one-hybrid system method.</title>
        <authorList>
            <person name="Yao Q.-H."/>
            <person name="Peng R.-H."/>
            <person name="Xiong A.-S."/>
        </authorList>
    </citation>
    <scope>NUCLEOTIDE SEQUENCE [MRNA] (ISOFORM 2)</scope>
</reference>
<reference key="2">
    <citation type="journal article" date="2005" name="Genome Res.">
        <title>Sequence, annotation, and analysis of synteny between rice chromosome 3 and diverged grass species.</title>
        <authorList>
            <consortium name="The rice chromosome 3 sequencing consortium"/>
            <person name="Buell C.R."/>
            <person name="Yuan Q."/>
            <person name="Ouyang S."/>
            <person name="Liu J."/>
            <person name="Zhu W."/>
            <person name="Wang A."/>
            <person name="Maiti R."/>
            <person name="Haas B."/>
            <person name="Wortman J."/>
            <person name="Pertea M."/>
            <person name="Jones K.M."/>
            <person name="Kim M."/>
            <person name="Overton L."/>
            <person name="Tsitrin T."/>
            <person name="Fadrosh D."/>
            <person name="Bera J."/>
            <person name="Weaver B."/>
            <person name="Jin S."/>
            <person name="Johri S."/>
            <person name="Reardon M."/>
            <person name="Webb K."/>
            <person name="Hill J."/>
            <person name="Moffat K."/>
            <person name="Tallon L."/>
            <person name="Van Aken S."/>
            <person name="Lewis M."/>
            <person name="Utterback T."/>
            <person name="Feldblyum T."/>
            <person name="Zismann V."/>
            <person name="Iobst S."/>
            <person name="Hsiao J."/>
            <person name="de Vazeille A.R."/>
            <person name="Salzberg S.L."/>
            <person name="White O."/>
            <person name="Fraser C.M."/>
            <person name="Yu Y."/>
            <person name="Kim H."/>
            <person name="Rambo T."/>
            <person name="Currie J."/>
            <person name="Collura K."/>
            <person name="Kernodle-Thompson S."/>
            <person name="Wei F."/>
            <person name="Kudrna K."/>
            <person name="Ammiraju J.S.S."/>
            <person name="Luo M."/>
            <person name="Goicoechea J.L."/>
            <person name="Wing R.A."/>
            <person name="Henry D."/>
            <person name="Oates R."/>
            <person name="Palmer M."/>
            <person name="Pries G."/>
            <person name="Saski C."/>
            <person name="Simmons J."/>
            <person name="Soderlund C."/>
            <person name="Nelson W."/>
            <person name="de la Bastide M."/>
            <person name="Spiegel L."/>
            <person name="Nascimento L."/>
            <person name="Huang E."/>
            <person name="Preston R."/>
            <person name="Zutavern T."/>
            <person name="Palmer L."/>
            <person name="O'Shaughnessy A."/>
            <person name="Dike S."/>
            <person name="McCombie W.R."/>
            <person name="Minx P."/>
            <person name="Cordum H."/>
            <person name="Wilson R."/>
            <person name="Jin W."/>
            <person name="Lee H.R."/>
            <person name="Jiang J."/>
            <person name="Jackson S."/>
        </authorList>
    </citation>
    <scope>NUCLEOTIDE SEQUENCE [LARGE SCALE GENOMIC DNA]</scope>
    <source>
        <strain>cv. Nipponbare</strain>
    </source>
</reference>
<reference key="3">
    <citation type="journal article" date="2005" name="Nature">
        <title>The map-based sequence of the rice genome.</title>
        <authorList>
            <consortium name="International rice genome sequencing project (IRGSP)"/>
        </authorList>
    </citation>
    <scope>NUCLEOTIDE SEQUENCE [LARGE SCALE GENOMIC DNA]</scope>
    <source>
        <strain>cv. Nipponbare</strain>
    </source>
</reference>
<reference key="4">
    <citation type="journal article" date="2008" name="Nucleic Acids Res.">
        <title>The rice annotation project database (RAP-DB): 2008 update.</title>
        <authorList>
            <consortium name="The rice annotation project (RAP)"/>
        </authorList>
    </citation>
    <scope>GENOME REANNOTATION</scope>
    <source>
        <strain>cv. Nipponbare</strain>
    </source>
</reference>
<reference key="5">
    <citation type="journal article" date="2013" name="Rice">
        <title>Improvement of the Oryza sativa Nipponbare reference genome using next generation sequence and optical map data.</title>
        <authorList>
            <person name="Kawahara Y."/>
            <person name="de la Bastide M."/>
            <person name="Hamilton J.P."/>
            <person name="Kanamori H."/>
            <person name="McCombie W.R."/>
            <person name="Ouyang S."/>
            <person name="Schwartz D.C."/>
            <person name="Tanaka T."/>
            <person name="Wu J."/>
            <person name="Zhou S."/>
            <person name="Childs K.L."/>
            <person name="Davidson R.M."/>
            <person name="Lin H."/>
            <person name="Quesada-Ocampo L."/>
            <person name="Vaillancourt B."/>
            <person name="Sakai H."/>
            <person name="Lee S.S."/>
            <person name="Kim J."/>
            <person name="Numa H."/>
            <person name="Itoh T."/>
            <person name="Buell C.R."/>
            <person name="Matsumoto T."/>
        </authorList>
    </citation>
    <scope>GENOME REANNOTATION</scope>
    <source>
        <strain>cv. Nipponbare</strain>
    </source>
</reference>
<reference key="6">
    <citation type="journal article" date="2005" name="PLoS Biol.">
        <title>The genomes of Oryza sativa: a history of duplications.</title>
        <authorList>
            <person name="Yu J."/>
            <person name="Wang J."/>
            <person name="Lin W."/>
            <person name="Li S."/>
            <person name="Li H."/>
            <person name="Zhou J."/>
            <person name="Ni P."/>
            <person name="Dong W."/>
            <person name="Hu S."/>
            <person name="Zeng C."/>
            <person name="Zhang J."/>
            <person name="Zhang Y."/>
            <person name="Li R."/>
            <person name="Xu Z."/>
            <person name="Li S."/>
            <person name="Li X."/>
            <person name="Zheng H."/>
            <person name="Cong L."/>
            <person name="Lin L."/>
            <person name="Yin J."/>
            <person name="Geng J."/>
            <person name="Li G."/>
            <person name="Shi J."/>
            <person name="Liu J."/>
            <person name="Lv H."/>
            <person name="Li J."/>
            <person name="Wang J."/>
            <person name="Deng Y."/>
            <person name="Ran L."/>
            <person name="Shi X."/>
            <person name="Wang X."/>
            <person name="Wu Q."/>
            <person name="Li C."/>
            <person name="Ren X."/>
            <person name="Wang J."/>
            <person name="Wang X."/>
            <person name="Li D."/>
            <person name="Liu D."/>
            <person name="Zhang X."/>
            <person name="Ji Z."/>
            <person name="Zhao W."/>
            <person name="Sun Y."/>
            <person name="Zhang Z."/>
            <person name="Bao J."/>
            <person name="Han Y."/>
            <person name="Dong L."/>
            <person name="Ji J."/>
            <person name="Chen P."/>
            <person name="Wu S."/>
            <person name="Liu J."/>
            <person name="Xiao Y."/>
            <person name="Bu D."/>
            <person name="Tan J."/>
            <person name="Yang L."/>
            <person name="Ye C."/>
            <person name="Zhang J."/>
            <person name="Xu J."/>
            <person name="Zhou Y."/>
            <person name="Yu Y."/>
            <person name="Zhang B."/>
            <person name="Zhuang S."/>
            <person name="Wei H."/>
            <person name="Liu B."/>
            <person name="Lei M."/>
            <person name="Yu H."/>
            <person name="Li Y."/>
            <person name="Xu H."/>
            <person name="Wei S."/>
            <person name="He X."/>
            <person name="Fang L."/>
            <person name="Zhang Z."/>
            <person name="Zhang Y."/>
            <person name="Huang X."/>
            <person name="Su Z."/>
            <person name="Tong W."/>
            <person name="Li J."/>
            <person name="Tong Z."/>
            <person name="Li S."/>
            <person name="Ye J."/>
            <person name="Wang L."/>
            <person name="Fang L."/>
            <person name="Lei T."/>
            <person name="Chen C.-S."/>
            <person name="Chen H.-C."/>
            <person name="Xu Z."/>
            <person name="Li H."/>
            <person name="Huang H."/>
            <person name="Zhang F."/>
            <person name="Xu H."/>
            <person name="Li N."/>
            <person name="Zhao C."/>
            <person name="Li S."/>
            <person name="Dong L."/>
            <person name="Huang Y."/>
            <person name="Li L."/>
            <person name="Xi Y."/>
            <person name="Qi Q."/>
            <person name="Li W."/>
            <person name="Zhang B."/>
            <person name="Hu W."/>
            <person name="Zhang Y."/>
            <person name="Tian X."/>
            <person name="Jiao Y."/>
            <person name="Liang X."/>
            <person name="Jin J."/>
            <person name="Gao L."/>
            <person name="Zheng W."/>
            <person name="Hao B."/>
            <person name="Liu S.-M."/>
            <person name="Wang W."/>
            <person name="Yuan L."/>
            <person name="Cao M."/>
            <person name="McDermott J."/>
            <person name="Samudrala R."/>
            <person name="Wang J."/>
            <person name="Wong G.K.-S."/>
            <person name="Yang H."/>
        </authorList>
    </citation>
    <scope>NUCLEOTIDE SEQUENCE [LARGE SCALE GENOMIC DNA]</scope>
    <source>
        <strain>cv. Nipponbare</strain>
    </source>
</reference>
<reference key="7">
    <citation type="journal article" date="2003" name="Science">
        <title>Collection, mapping, and annotation of over 28,000 cDNA clones from japonica rice.</title>
        <authorList>
            <consortium name="The rice full-length cDNA consortium"/>
        </authorList>
    </citation>
    <scope>NUCLEOTIDE SEQUENCE [LARGE SCALE MRNA] (ISOFORM 1)</scope>
    <source>
        <strain>cv. Nipponbare</strain>
    </source>
</reference>
<reference key="8">
    <citation type="journal article" date="2004" name="Plant J.">
        <title>Development of an efficient method for the isolation of factors involved in gene transcription during rice embryo development.</title>
        <authorList>
            <person name="Ye R."/>
            <person name="Yao Q.-H."/>
            <person name="Xu Z.-H."/>
            <person name="Xue H.-W."/>
        </authorList>
    </citation>
    <scope>NUCLEOTIDE SEQUENCE [MRNA] OF 322-403</scope>
    <source>
        <tissue>Embryo</tissue>
    </source>
</reference>
<reference key="9">
    <citation type="journal article" date="2004" name="J. Biosci.">
        <title>Heat stress response in plants: a complex game with chaperones and more than twenty heat stress transcription factors.</title>
        <authorList>
            <person name="Baniwal S.K."/>
            <person name="Bharti K."/>
            <person name="Chan K.Y."/>
            <person name="Fauth M."/>
            <person name="Ganguli A."/>
            <person name="Kotak S."/>
            <person name="Mishra S.K."/>
            <person name="Nover L."/>
            <person name="Port M."/>
            <person name="Scharf K.-D."/>
            <person name="Tripp J."/>
            <person name="Weber C."/>
            <person name="Zielinski D."/>
            <person name="von Koskull-Doering P."/>
        </authorList>
    </citation>
    <scope>GENE FAMILY</scope>
    <scope>NOMENCLATURE</scope>
</reference>
<reference key="10">
    <citation type="journal article" date="2008" name="J. Genet. Genomics">
        <title>Genome-wide analysis of heat shock transcription factor families in rice and Arabidopsis.</title>
        <authorList>
            <person name="Guo J."/>
            <person name="Wu J."/>
            <person name="Ji Q."/>
            <person name="Wang C."/>
            <person name="Luo L."/>
            <person name="Yuan Y."/>
            <person name="Wang Y."/>
            <person name="Wang J."/>
        </authorList>
    </citation>
    <scope>GENE FAMILY</scope>
    <scope>NOMENCLATURE</scope>
</reference>
<sequence>MGSKKRSPQHPAAAAPPPAVGGGGGGEVSGDGGASTANGPVVPKPSEVAPFLTKVYDMVSDPATDNVISWAEGGGSFVIWDSHAFERDLHRHFKHSNFTSFIRQLNTYGFRKVHPDRWEWANEGFIMGQKHLLKTIKRRKKSSQESPSEIQKAPVKTAPGTENIEIGKYGGLEKEVETLKRDKALLMQQLVDLRHYQQTSNLEVQNLIERLQVMEQNQQQMMALLAIVVQNPSFLNQLVQQQQQQRRSNWWSPDGSKKRRFHALEQGPVTDQETSGRGAHIVEYLPPVPETSGQVNPVEGAICSANSQPVPSPAVATPMDMQTSNVADTLGSSEEPFADNSTLHEWDDNDMQLLFDDNLDPILPPFENDGQMGPPLSVQDYDFPQLEQDCLMEAQYNSNNPQYADVITEA</sequence>